<keyword id="KW-0067">ATP-binding</keyword>
<keyword id="KW-0963">Cytoplasm</keyword>
<keyword id="KW-0418">Kinase</keyword>
<keyword id="KW-0547">Nucleotide-binding</keyword>
<keyword id="KW-0665">Pyrimidine biosynthesis</keyword>
<keyword id="KW-1185">Reference proteome</keyword>
<keyword id="KW-0808">Transferase</keyword>
<accession>A1A1I1</accession>
<comment type="function">
    <text evidence="1">Catalyzes the reversible phosphorylation of UMP to UDP.</text>
</comment>
<comment type="catalytic activity">
    <reaction evidence="1">
        <text>UMP + ATP = UDP + ADP</text>
        <dbReference type="Rhea" id="RHEA:24400"/>
        <dbReference type="ChEBI" id="CHEBI:30616"/>
        <dbReference type="ChEBI" id="CHEBI:57865"/>
        <dbReference type="ChEBI" id="CHEBI:58223"/>
        <dbReference type="ChEBI" id="CHEBI:456216"/>
        <dbReference type="EC" id="2.7.4.22"/>
    </reaction>
</comment>
<comment type="activity regulation">
    <text evidence="1">Inhibited by UTP.</text>
</comment>
<comment type="pathway">
    <text evidence="1">Pyrimidine metabolism; CTP biosynthesis via de novo pathway; UDP from UMP (UMPK route): step 1/1.</text>
</comment>
<comment type="subunit">
    <text evidence="1">Homohexamer.</text>
</comment>
<comment type="subcellular location">
    <subcellularLocation>
        <location evidence="1">Cytoplasm</location>
    </subcellularLocation>
</comment>
<comment type="similarity">
    <text evidence="1">Belongs to the UMP kinase family.</text>
</comment>
<feature type="chain" id="PRO_0000323793" description="Uridylate kinase">
    <location>
        <begin position="1"/>
        <end position="249"/>
    </location>
</feature>
<feature type="binding site" evidence="1">
    <location>
        <begin position="16"/>
        <end position="19"/>
    </location>
    <ligand>
        <name>ATP</name>
        <dbReference type="ChEBI" id="CHEBI:30616"/>
    </ligand>
</feature>
<feature type="binding site" evidence="1">
    <location>
        <position position="57"/>
    </location>
    <ligand>
        <name>UMP</name>
        <dbReference type="ChEBI" id="CHEBI:57865"/>
    </ligand>
</feature>
<feature type="binding site" evidence="1">
    <location>
        <position position="58"/>
    </location>
    <ligand>
        <name>ATP</name>
        <dbReference type="ChEBI" id="CHEBI:30616"/>
    </ligand>
</feature>
<feature type="binding site" evidence="1">
    <location>
        <position position="62"/>
    </location>
    <ligand>
        <name>ATP</name>
        <dbReference type="ChEBI" id="CHEBI:30616"/>
    </ligand>
</feature>
<feature type="binding site" evidence="1">
    <location>
        <position position="77"/>
    </location>
    <ligand>
        <name>UMP</name>
        <dbReference type="ChEBI" id="CHEBI:57865"/>
    </ligand>
</feature>
<feature type="binding site" evidence="1">
    <location>
        <begin position="138"/>
        <end position="145"/>
    </location>
    <ligand>
        <name>UMP</name>
        <dbReference type="ChEBI" id="CHEBI:57865"/>
    </ligand>
</feature>
<feature type="binding site" evidence="1">
    <location>
        <position position="166"/>
    </location>
    <ligand>
        <name>ATP</name>
        <dbReference type="ChEBI" id="CHEBI:30616"/>
    </ligand>
</feature>
<feature type="binding site" evidence="1">
    <location>
        <position position="172"/>
    </location>
    <ligand>
        <name>ATP</name>
        <dbReference type="ChEBI" id="CHEBI:30616"/>
    </ligand>
</feature>
<feature type="binding site" evidence="1">
    <location>
        <position position="175"/>
    </location>
    <ligand>
        <name>ATP</name>
        <dbReference type="ChEBI" id="CHEBI:30616"/>
    </ligand>
</feature>
<dbReference type="EC" id="2.7.4.22" evidence="1"/>
<dbReference type="EMBL" id="AP009256">
    <property type="protein sequence ID" value="BAF39564.1"/>
    <property type="molecule type" value="Genomic_DNA"/>
</dbReference>
<dbReference type="RefSeq" id="WP_003809324.1">
    <property type="nucleotide sequence ID" value="NZ_CAXVIV010000001.1"/>
</dbReference>
<dbReference type="SMR" id="A1A1I1"/>
<dbReference type="STRING" id="367928.BAD_0783"/>
<dbReference type="PaxDb" id="1680-BADO_0832"/>
<dbReference type="GeneID" id="4556611"/>
<dbReference type="KEGG" id="bad:BAD_0783"/>
<dbReference type="HOGENOM" id="CLU_033861_0_0_11"/>
<dbReference type="UniPathway" id="UPA00159">
    <property type="reaction ID" value="UER00275"/>
</dbReference>
<dbReference type="Proteomes" id="UP000008702">
    <property type="component" value="Chromosome"/>
</dbReference>
<dbReference type="GO" id="GO:0005737">
    <property type="term" value="C:cytoplasm"/>
    <property type="evidence" value="ECO:0007669"/>
    <property type="project" value="UniProtKB-SubCell"/>
</dbReference>
<dbReference type="GO" id="GO:0005524">
    <property type="term" value="F:ATP binding"/>
    <property type="evidence" value="ECO:0007669"/>
    <property type="project" value="UniProtKB-KW"/>
</dbReference>
<dbReference type="GO" id="GO:0033862">
    <property type="term" value="F:UMP kinase activity"/>
    <property type="evidence" value="ECO:0007669"/>
    <property type="project" value="UniProtKB-EC"/>
</dbReference>
<dbReference type="GO" id="GO:0044210">
    <property type="term" value="P:'de novo' CTP biosynthetic process"/>
    <property type="evidence" value="ECO:0007669"/>
    <property type="project" value="UniProtKB-UniRule"/>
</dbReference>
<dbReference type="GO" id="GO:0006225">
    <property type="term" value="P:UDP biosynthetic process"/>
    <property type="evidence" value="ECO:0007669"/>
    <property type="project" value="TreeGrafter"/>
</dbReference>
<dbReference type="CDD" id="cd04254">
    <property type="entry name" value="AAK_UMPK-PyrH-Ec"/>
    <property type="match status" value="1"/>
</dbReference>
<dbReference type="FunFam" id="3.40.1160.10:FF:000001">
    <property type="entry name" value="Uridylate kinase"/>
    <property type="match status" value="1"/>
</dbReference>
<dbReference type="Gene3D" id="3.40.1160.10">
    <property type="entry name" value="Acetylglutamate kinase-like"/>
    <property type="match status" value="1"/>
</dbReference>
<dbReference type="HAMAP" id="MF_01220_B">
    <property type="entry name" value="PyrH_B"/>
    <property type="match status" value="1"/>
</dbReference>
<dbReference type="InterPro" id="IPR036393">
    <property type="entry name" value="AceGlu_kinase-like_sf"/>
</dbReference>
<dbReference type="InterPro" id="IPR001048">
    <property type="entry name" value="Asp/Glu/Uridylate_kinase"/>
</dbReference>
<dbReference type="InterPro" id="IPR011817">
    <property type="entry name" value="Uridylate_kinase"/>
</dbReference>
<dbReference type="InterPro" id="IPR015963">
    <property type="entry name" value="Uridylate_kinase_bac"/>
</dbReference>
<dbReference type="NCBIfam" id="TIGR02075">
    <property type="entry name" value="pyrH_bact"/>
    <property type="match status" value="1"/>
</dbReference>
<dbReference type="PANTHER" id="PTHR42833">
    <property type="entry name" value="URIDYLATE KINASE"/>
    <property type="match status" value="1"/>
</dbReference>
<dbReference type="PANTHER" id="PTHR42833:SF4">
    <property type="entry name" value="URIDYLATE KINASE PUMPKIN, CHLOROPLASTIC"/>
    <property type="match status" value="1"/>
</dbReference>
<dbReference type="Pfam" id="PF00696">
    <property type="entry name" value="AA_kinase"/>
    <property type="match status" value="1"/>
</dbReference>
<dbReference type="PIRSF" id="PIRSF005650">
    <property type="entry name" value="Uridylate_kin"/>
    <property type="match status" value="1"/>
</dbReference>
<dbReference type="SUPFAM" id="SSF53633">
    <property type="entry name" value="Carbamate kinase-like"/>
    <property type="match status" value="1"/>
</dbReference>
<organism>
    <name type="scientific">Bifidobacterium adolescentis (strain ATCC 15703 / DSM 20083 / NCTC 11814 / E194a)</name>
    <dbReference type="NCBI Taxonomy" id="367928"/>
    <lineage>
        <taxon>Bacteria</taxon>
        <taxon>Bacillati</taxon>
        <taxon>Actinomycetota</taxon>
        <taxon>Actinomycetes</taxon>
        <taxon>Bifidobacteriales</taxon>
        <taxon>Bifidobacteriaceae</taxon>
        <taxon>Bifidobacterium</taxon>
    </lineage>
</organism>
<gene>
    <name evidence="1" type="primary">pyrH</name>
    <name type="ordered locus">BAD_0783</name>
</gene>
<evidence type="ECO:0000255" key="1">
    <source>
        <dbReference type="HAMAP-Rule" id="MF_01220"/>
    </source>
</evidence>
<proteinExistence type="inferred from homology"/>
<protein>
    <recommendedName>
        <fullName evidence="1">Uridylate kinase</fullName>
        <shortName evidence="1">UK</shortName>
        <ecNumber evidence="1">2.7.4.22</ecNumber>
    </recommendedName>
    <alternativeName>
        <fullName evidence="1">Uridine monophosphate kinase</fullName>
        <shortName evidence="1">UMP kinase</shortName>
        <shortName evidence="1">UMPK</shortName>
    </alternativeName>
</protein>
<name>PYRH_BIFAA</name>
<sequence length="249" mass="26639">MTGENTGDNPRRVLLKLSGEAFGGGKVGIDTTVVRRIAEEIVPAVKQGVQVAIVVGGGNFFRGAELQQAGIDRSRGDYMGMLGTVMNCLALQDFLEQEGQATRVQTAITMGQVAEPYIPLKAIRHLEKGRVVIFGAGAGMPYFSTDTVSIQRSLEIHCDEVLMGKNGVDGVYTADPRKDENAKRFATLSYNRALVDNLAVMDAAALSMARDNKQRIRVFGLEGAGNVTQALLGEEIGTMVSTAESTLAE</sequence>
<reference key="1">
    <citation type="submission" date="2006-12" db="EMBL/GenBank/DDBJ databases">
        <title>Bifidobacterium adolescentis complete genome sequence.</title>
        <authorList>
            <person name="Suzuki T."/>
            <person name="Tsuda Y."/>
            <person name="Kanou N."/>
            <person name="Inoue T."/>
            <person name="Kumazaki K."/>
            <person name="Nagano S."/>
            <person name="Hirai S."/>
            <person name="Tanaka K."/>
            <person name="Watanabe K."/>
        </authorList>
    </citation>
    <scope>NUCLEOTIDE SEQUENCE [LARGE SCALE GENOMIC DNA]</scope>
    <source>
        <strain>ATCC 15703 / DSM 20083 / NCTC 11814 / E194a</strain>
    </source>
</reference>